<accession>Q8DIN0</accession>
<dbReference type="EC" id="6.1.1.11" evidence="1"/>
<dbReference type="EMBL" id="BA000039">
    <property type="protein sequence ID" value="BAC09104.1"/>
    <property type="molecule type" value="Genomic_DNA"/>
</dbReference>
<dbReference type="RefSeq" id="NP_682342.1">
    <property type="nucleotide sequence ID" value="NC_004113.1"/>
</dbReference>
<dbReference type="RefSeq" id="WP_011057392.1">
    <property type="nucleotide sequence ID" value="NC_004113.1"/>
</dbReference>
<dbReference type="SMR" id="Q8DIN0"/>
<dbReference type="STRING" id="197221.gene:10748153"/>
<dbReference type="EnsemblBacteria" id="BAC09104">
    <property type="protein sequence ID" value="BAC09104"/>
    <property type="gene ID" value="BAC09104"/>
</dbReference>
<dbReference type="KEGG" id="tel:tlr1552"/>
<dbReference type="PATRIC" id="fig|197221.4.peg.1628"/>
<dbReference type="eggNOG" id="COG0172">
    <property type="taxonomic scope" value="Bacteria"/>
</dbReference>
<dbReference type="UniPathway" id="UPA00906">
    <property type="reaction ID" value="UER00895"/>
</dbReference>
<dbReference type="Proteomes" id="UP000000440">
    <property type="component" value="Chromosome"/>
</dbReference>
<dbReference type="GO" id="GO:0005737">
    <property type="term" value="C:cytoplasm"/>
    <property type="evidence" value="ECO:0007669"/>
    <property type="project" value="UniProtKB-SubCell"/>
</dbReference>
<dbReference type="GO" id="GO:0005524">
    <property type="term" value="F:ATP binding"/>
    <property type="evidence" value="ECO:0007669"/>
    <property type="project" value="UniProtKB-UniRule"/>
</dbReference>
<dbReference type="GO" id="GO:0004828">
    <property type="term" value="F:serine-tRNA ligase activity"/>
    <property type="evidence" value="ECO:0007669"/>
    <property type="project" value="UniProtKB-UniRule"/>
</dbReference>
<dbReference type="GO" id="GO:0016260">
    <property type="term" value="P:selenocysteine biosynthetic process"/>
    <property type="evidence" value="ECO:0007669"/>
    <property type="project" value="UniProtKB-UniRule"/>
</dbReference>
<dbReference type="GO" id="GO:0006434">
    <property type="term" value="P:seryl-tRNA aminoacylation"/>
    <property type="evidence" value="ECO:0007669"/>
    <property type="project" value="UniProtKB-UniRule"/>
</dbReference>
<dbReference type="CDD" id="cd00770">
    <property type="entry name" value="SerRS_core"/>
    <property type="match status" value="1"/>
</dbReference>
<dbReference type="Gene3D" id="3.30.930.10">
    <property type="entry name" value="Bira Bifunctional Protein, Domain 2"/>
    <property type="match status" value="1"/>
</dbReference>
<dbReference type="Gene3D" id="1.10.287.40">
    <property type="entry name" value="Serine-tRNA synthetase, tRNA binding domain"/>
    <property type="match status" value="1"/>
</dbReference>
<dbReference type="HAMAP" id="MF_00176">
    <property type="entry name" value="Ser_tRNA_synth_type1"/>
    <property type="match status" value="1"/>
</dbReference>
<dbReference type="InterPro" id="IPR002314">
    <property type="entry name" value="aa-tRNA-synt_IIb"/>
</dbReference>
<dbReference type="InterPro" id="IPR006195">
    <property type="entry name" value="aa-tRNA-synth_II"/>
</dbReference>
<dbReference type="InterPro" id="IPR045864">
    <property type="entry name" value="aa-tRNA-synth_II/BPL/LPL"/>
</dbReference>
<dbReference type="InterPro" id="IPR002317">
    <property type="entry name" value="Ser-tRNA-ligase_type_1"/>
</dbReference>
<dbReference type="InterPro" id="IPR015866">
    <property type="entry name" value="Ser-tRNA-synth_1_N"/>
</dbReference>
<dbReference type="InterPro" id="IPR042103">
    <property type="entry name" value="SerRS_1_N_sf"/>
</dbReference>
<dbReference type="InterPro" id="IPR033729">
    <property type="entry name" value="SerRS_core"/>
</dbReference>
<dbReference type="InterPro" id="IPR010978">
    <property type="entry name" value="tRNA-bd_arm"/>
</dbReference>
<dbReference type="NCBIfam" id="TIGR00414">
    <property type="entry name" value="serS"/>
    <property type="match status" value="1"/>
</dbReference>
<dbReference type="PANTHER" id="PTHR43697:SF1">
    <property type="entry name" value="SERINE--TRNA LIGASE"/>
    <property type="match status" value="1"/>
</dbReference>
<dbReference type="PANTHER" id="PTHR43697">
    <property type="entry name" value="SERYL-TRNA SYNTHETASE"/>
    <property type="match status" value="1"/>
</dbReference>
<dbReference type="Pfam" id="PF02403">
    <property type="entry name" value="Seryl_tRNA_N"/>
    <property type="match status" value="1"/>
</dbReference>
<dbReference type="Pfam" id="PF00587">
    <property type="entry name" value="tRNA-synt_2b"/>
    <property type="match status" value="1"/>
</dbReference>
<dbReference type="PIRSF" id="PIRSF001529">
    <property type="entry name" value="Ser-tRNA-synth_IIa"/>
    <property type="match status" value="1"/>
</dbReference>
<dbReference type="PRINTS" id="PR00981">
    <property type="entry name" value="TRNASYNTHSER"/>
</dbReference>
<dbReference type="SUPFAM" id="SSF55681">
    <property type="entry name" value="Class II aaRS and biotin synthetases"/>
    <property type="match status" value="1"/>
</dbReference>
<dbReference type="SUPFAM" id="SSF46589">
    <property type="entry name" value="tRNA-binding arm"/>
    <property type="match status" value="1"/>
</dbReference>
<dbReference type="PROSITE" id="PS50862">
    <property type="entry name" value="AA_TRNA_LIGASE_II"/>
    <property type="match status" value="1"/>
</dbReference>
<gene>
    <name evidence="1" type="primary">serS</name>
    <name type="ordered locus">tlr1552</name>
</gene>
<reference key="1">
    <citation type="journal article" date="2002" name="DNA Res.">
        <title>Complete genome structure of the thermophilic cyanobacterium Thermosynechococcus elongatus BP-1.</title>
        <authorList>
            <person name="Nakamura Y."/>
            <person name="Kaneko T."/>
            <person name="Sato S."/>
            <person name="Ikeuchi M."/>
            <person name="Katoh H."/>
            <person name="Sasamoto S."/>
            <person name="Watanabe A."/>
            <person name="Iriguchi M."/>
            <person name="Kawashima K."/>
            <person name="Kimura T."/>
            <person name="Kishida Y."/>
            <person name="Kiyokawa C."/>
            <person name="Kohara M."/>
            <person name="Matsumoto M."/>
            <person name="Matsuno A."/>
            <person name="Nakazaki N."/>
            <person name="Shimpo S."/>
            <person name="Sugimoto M."/>
            <person name="Takeuchi C."/>
            <person name="Yamada M."/>
            <person name="Tabata S."/>
        </authorList>
    </citation>
    <scope>NUCLEOTIDE SEQUENCE [LARGE SCALE GENOMIC DNA]</scope>
    <source>
        <strain>NIES-2133 / IAM M-273 / BP-1</strain>
    </source>
</reference>
<proteinExistence type="inferred from homology"/>
<keyword id="KW-0030">Aminoacyl-tRNA synthetase</keyword>
<keyword id="KW-0067">ATP-binding</keyword>
<keyword id="KW-0963">Cytoplasm</keyword>
<keyword id="KW-0436">Ligase</keyword>
<keyword id="KW-0547">Nucleotide-binding</keyword>
<keyword id="KW-0648">Protein biosynthesis</keyword>
<keyword id="KW-1185">Reference proteome</keyword>
<protein>
    <recommendedName>
        <fullName evidence="1">Serine--tRNA ligase</fullName>
        <ecNumber evidence="1">6.1.1.11</ecNumber>
    </recommendedName>
    <alternativeName>
        <fullName evidence="1">Seryl-tRNA synthetase</fullName>
        <shortName evidence="1">SerRS</shortName>
    </alternativeName>
    <alternativeName>
        <fullName evidence="1">Seryl-tRNA(Ser/Sec) synthetase</fullName>
    </alternativeName>
</protein>
<sequence length="430" mass="48308">MIDLKQLRENPQAFGDRLRRRGGDFDLDRILELDAQQRQLEQQRSQLQARSNEIGALVGKKIKSGIAPTDPEIQALKAEANALKQKLSDLEPQERQLKEELESLLLTIPNPPSETTPIGRDETDNVEVRRWGEEYKPTYPCQPHWDIGTRLGLWDVERSVKVAQSRFVTLLGLGAALERALIQFMLDSHRERGYVEVLPPLLVNTASLTGTGQLPKFAEESFRCADDDLWLIPTAEVPVTNLYRDEILAADQLPIYHCAYTPCFRREAGSYGKDTRGLIRLHQFNKVELVKFVHPETSAAEHEALVADAEFILQALKLPYRVIELCTGDLGFAAMKCYDLEVWLPAAGCYREISSCSNFGDFQARRAKIRFKGAKHKGTQFVHTLNGSGLAVGRTMAAILENYQQPDGTVRVPEVLQPYLKCSHIGGAKS</sequence>
<evidence type="ECO:0000255" key="1">
    <source>
        <dbReference type="HAMAP-Rule" id="MF_00176"/>
    </source>
</evidence>
<name>SYS_THEVB</name>
<comment type="function">
    <text evidence="1">Catalyzes the attachment of serine to tRNA(Ser). Is also able to aminoacylate tRNA(Sec) with serine, to form the misacylated tRNA L-seryl-tRNA(Sec), which will be further converted into selenocysteinyl-tRNA(Sec).</text>
</comment>
<comment type="catalytic activity">
    <reaction evidence="1">
        <text>tRNA(Ser) + L-serine + ATP = L-seryl-tRNA(Ser) + AMP + diphosphate + H(+)</text>
        <dbReference type="Rhea" id="RHEA:12292"/>
        <dbReference type="Rhea" id="RHEA-COMP:9669"/>
        <dbReference type="Rhea" id="RHEA-COMP:9703"/>
        <dbReference type="ChEBI" id="CHEBI:15378"/>
        <dbReference type="ChEBI" id="CHEBI:30616"/>
        <dbReference type="ChEBI" id="CHEBI:33019"/>
        <dbReference type="ChEBI" id="CHEBI:33384"/>
        <dbReference type="ChEBI" id="CHEBI:78442"/>
        <dbReference type="ChEBI" id="CHEBI:78533"/>
        <dbReference type="ChEBI" id="CHEBI:456215"/>
        <dbReference type="EC" id="6.1.1.11"/>
    </reaction>
</comment>
<comment type="catalytic activity">
    <reaction evidence="1">
        <text>tRNA(Sec) + L-serine + ATP = L-seryl-tRNA(Sec) + AMP + diphosphate + H(+)</text>
        <dbReference type="Rhea" id="RHEA:42580"/>
        <dbReference type="Rhea" id="RHEA-COMP:9742"/>
        <dbReference type="Rhea" id="RHEA-COMP:10128"/>
        <dbReference type="ChEBI" id="CHEBI:15378"/>
        <dbReference type="ChEBI" id="CHEBI:30616"/>
        <dbReference type="ChEBI" id="CHEBI:33019"/>
        <dbReference type="ChEBI" id="CHEBI:33384"/>
        <dbReference type="ChEBI" id="CHEBI:78442"/>
        <dbReference type="ChEBI" id="CHEBI:78533"/>
        <dbReference type="ChEBI" id="CHEBI:456215"/>
        <dbReference type="EC" id="6.1.1.11"/>
    </reaction>
</comment>
<comment type="pathway">
    <text evidence="1">Aminoacyl-tRNA biosynthesis; selenocysteinyl-tRNA(Sec) biosynthesis; L-seryl-tRNA(Sec) from L-serine and tRNA(Sec): step 1/1.</text>
</comment>
<comment type="subunit">
    <text evidence="1">Homodimer. The tRNA molecule binds across the dimer.</text>
</comment>
<comment type="subcellular location">
    <subcellularLocation>
        <location evidence="1">Cytoplasm</location>
    </subcellularLocation>
</comment>
<comment type="domain">
    <text evidence="1">Consists of two distinct domains, a catalytic core and a N-terminal extension that is involved in tRNA binding.</text>
</comment>
<comment type="similarity">
    <text evidence="1">Belongs to the class-II aminoacyl-tRNA synthetase family. Type-1 seryl-tRNA synthetase subfamily.</text>
</comment>
<feature type="chain" id="PRO_0000122140" description="Serine--tRNA ligase">
    <location>
        <begin position="1"/>
        <end position="430"/>
    </location>
</feature>
<feature type="binding site" evidence="1">
    <location>
        <begin position="234"/>
        <end position="236"/>
    </location>
    <ligand>
        <name>L-serine</name>
        <dbReference type="ChEBI" id="CHEBI:33384"/>
    </ligand>
</feature>
<feature type="binding site" evidence="1">
    <location>
        <begin position="265"/>
        <end position="267"/>
    </location>
    <ligand>
        <name>ATP</name>
        <dbReference type="ChEBI" id="CHEBI:30616"/>
    </ligand>
</feature>
<feature type="binding site" evidence="1">
    <location>
        <position position="288"/>
    </location>
    <ligand>
        <name>L-serine</name>
        <dbReference type="ChEBI" id="CHEBI:33384"/>
    </ligand>
</feature>
<feature type="binding site" evidence="1">
    <location>
        <begin position="352"/>
        <end position="355"/>
    </location>
    <ligand>
        <name>ATP</name>
        <dbReference type="ChEBI" id="CHEBI:30616"/>
    </ligand>
</feature>
<feature type="binding site" evidence="1">
    <location>
        <position position="388"/>
    </location>
    <ligand>
        <name>L-serine</name>
        <dbReference type="ChEBI" id="CHEBI:33384"/>
    </ligand>
</feature>
<organism>
    <name type="scientific">Thermosynechococcus vestitus (strain NIES-2133 / IAM M-273 / BP-1)</name>
    <dbReference type="NCBI Taxonomy" id="197221"/>
    <lineage>
        <taxon>Bacteria</taxon>
        <taxon>Bacillati</taxon>
        <taxon>Cyanobacteriota</taxon>
        <taxon>Cyanophyceae</taxon>
        <taxon>Acaryochloridales</taxon>
        <taxon>Thermosynechococcaceae</taxon>
        <taxon>Thermosynechococcus</taxon>
    </lineage>
</organism>